<evidence type="ECO:0000250" key="1"/>
<evidence type="ECO:0000255" key="2"/>
<evidence type="ECO:0000269" key="3">
    <source>
    </source>
</evidence>
<evidence type="ECO:0000269" key="4">
    <source>
    </source>
</evidence>
<evidence type="ECO:0000269" key="5">
    <source>
    </source>
</evidence>
<evidence type="ECO:0000269" key="6">
    <source>
    </source>
</evidence>
<evidence type="ECO:0000305" key="7"/>
<organism>
    <name type="scientific">Saccharomyces cerevisiae (strain ATCC 204508 / S288c)</name>
    <name type="common">Baker's yeast</name>
    <dbReference type="NCBI Taxonomy" id="559292"/>
    <lineage>
        <taxon>Eukaryota</taxon>
        <taxon>Fungi</taxon>
        <taxon>Dikarya</taxon>
        <taxon>Ascomycota</taxon>
        <taxon>Saccharomycotina</taxon>
        <taxon>Saccharomycetes</taxon>
        <taxon>Saccharomycetales</taxon>
        <taxon>Saccharomycetaceae</taxon>
        <taxon>Saccharomyces</taxon>
    </lineage>
</organism>
<name>SDH3_YEAST</name>
<dbReference type="EMBL" id="Z25464">
    <property type="protein sequence ID" value="CAA80957.1"/>
    <property type="molecule type" value="Genomic_DNA"/>
</dbReference>
<dbReference type="EMBL" id="X73884">
    <property type="protein sequence ID" value="CAA52088.1"/>
    <property type="molecule type" value="Genomic_DNA"/>
</dbReference>
<dbReference type="EMBL" id="Z28141">
    <property type="protein sequence ID" value="CAA81982.1"/>
    <property type="molecule type" value="Genomic_DNA"/>
</dbReference>
<dbReference type="EMBL" id="AY693024">
    <property type="protein sequence ID" value="AAT93043.1"/>
    <property type="molecule type" value="Genomic_DNA"/>
</dbReference>
<dbReference type="EMBL" id="BK006944">
    <property type="protein sequence ID" value="DAA09021.1"/>
    <property type="molecule type" value="Genomic_DNA"/>
</dbReference>
<dbReference type="PIR" id="S37970">
    <property type="entry name" value="S37970"/>
</dbReference>
<dbReference type="RefSeq" id="NP_012781.1">
    <property type="nucleotide sequence ID" value="NM_001179707.1"/>
</dbReference>
<dbReference type="PDB" id="6LO8">
    <property type="method" value="EM"/>
    <property type="resolution" value="3.83 A"/>
    <property type="chains" value="C=1-198"/>
</dbReference>
<dbReference type="PDBsum" id="6LO8"/>
<dbReference type="EMDB" id="EMD-0935"/>
<dbReference type="SMR" id="P33421"/>
<dbReference type="BioGRID" id="33995">
    <property type="interactions" value="78"/>
</dbReference>
<dbReference type="ComplexPortal" id="CPX-565">
    <property type="entry name" value="Mitochondrial respiratory chain complex II"/>
</dbReference>
<dbReference type="DIP" id="DIP-5310N"/>
<dbReference type="FunCoup" id="P33421">
    <property type="interactions" value="480"/>
</dbReference>
<dbReference type="IntAct" id="P33421">
    <property type="interactions" value="2"/>
</dbReference>
<dbReference type="STRING" id="4932.YKL141W"/>
<dbReference type="MoonProt" id="P33421"/>
<dbReference type="PaxDb" id="4932-YKL141W"/>
<dbReference type="PeptideAtlas" id="P33421"/>
<dbReference type="EnsemblFungi" id="YKL141W_mRNA">
    <property type="protein sequence ID" value="YKL141W"/>
    <property type="gene ID" value="YKL141W"/>
</dbReference>
<dbReference type="GeneID" id="853716"/>
<dbReference type="KEGG" id="sce:YKL141W"/>
<dbReference type="AGR" id="SGD:S000001624"/>
<dbReference type="SGD" id="S000001624">
    <property type="gene designation" value="SDH3"/>
</dbReference>
<dbReference type="VEuPathDB" id="FungiDB:YKL141W"/>
<dbReference type="eggNOG" id="KOG0449">
    <property type="taxonomic scope" value="Eukaryota"/>
</dbReference>
<dbReference type="GeneTree" id="ENSGT00390000000566"/>
<dbReference type="HOGENOM" id="CLU_094691_0_0_1"/>
<dbReference type="InParanoid" id="P33421"/>
<dbReference type="OMA" id="MNGIRHL"/>
<dbReference type="OrthoDB" id="588261at2759"/>
<dbReference type="BioCyc" id="MetaCyc:YKL141W-MONOMER"/>
<dbReference type="BioCyc" id="YEAST:YKL141W-MONOMER"/>
<dbReference type="Reactome" id="R-SCE-71403">
    <property type="pathway name" value="Citric acid cycle (TCA cycle)"/>
</dbReference>
<dbReference type="UniPathway" id="UPA00223"/>
<dbReference type="BioGRID-ORCS" id="853716">
    <property type="hits" value="8 hits in 10 CRISPR screens"/>
</dbReference>
<dbReference type="PRO" id="PR:P33421"/>
<dbReference type="Proteomes" id="UP000002311">
    <property type="component" value="Chromosome XI"/>
</dbReference>
<dbReference type="RNAct" id="P33421">
    <property type="molecule type" value="protein"/>
</dbReference>
<dbReference type="GO" id="GO:0005743">
    <property type="term" value="C:mitochondrial inner membrane"/>
    <property type="evidence" value="ECO:0000314"/>
    <property type="project" value="ComplexPortal"/>
</dbReference>
<dbReference type="GO" id="GO:0005739">
    <property type="term" value="C:mitochondrion"/>
    <property type="evidence" value="ECO:0007005"/>
    <property type="project" value="SGD"/>
</dbReference>
<dbReference type="GO" id="GO:0045273">
    <property type="term" value="C:respiratory chain complex II (succinate dehydrogenase)"/>
    <property type="evidence" value="ECO:0000314"/>
    <property type="project" value="SGD"/>
</dbReference>
<dbReference type="GO" id="GO:0042721">
    <property type="term" value="C:TIM22 mitochondrial import inner membrane insertion complex"/>
    <property type="evidence" value="ECO:0000314"/>
    <property type="project" value="SGD"/>
</dbReference>
<dbReference type="GO" id="GO:0009055">
    <property type="term" value="F:electron transfer activity"/>
    <property type="evidence" value="ECO:0007669"/>
    <property type="project" value="InterPro"/>
</dbReference>
<dbReference type="GO" id="GO:0046872">
    <property type="term" value="F:metal ion binding"/>
    <property type="evidence" value="ECO:0007669"/>
    <property type="project" value="UniProtKB-KW"/>
</dbReference>
<dbReference type="GO" id="GO:0048038">
    <property type="term" value="F:quinone binding"/>
    <property type="evidence" value="ECO:0007669"/>
    <property type="project" value="UniProtKB-KW"/>
</dbReference>
<dbReference type="GO" id="GO:0045333">
    <property type="term" value="P:cellular respiration"/>
    <property type="evidence" value="ECO:0000315"/>
    <property type="project" value="SGD"/>
</dbReference>
<dbReference type="GO" id="GO:0006121">
    <property type="term" value="P:mitochondrial electron transport, succinate to ubiquinone"/>
    <property type="evidence" value="ECO:0000314"/>
    <property type="project" value="ComplexPortal"/>
</dbReference>
<dbReference type="GO" id="GO:0045039">
    <property type="term" value="P:protein insertion into mitochondrial inner membrane"/>
    <property type="evidence" value="ECO:0000315"/>
    <property type="project" value="SGD"/>
</dbReference>
<dbReference type="GO" id="GO:0006099">
    <property type="term" value="P:tricarboxylic acid cycle"/>
    <property type="evidence" value="ECO:0000314"/>
    <property type="project" value="ComplexPortal"/>
</dbReference>
<dbReference type="CDD" id="cd03499">
    <property type="entry name" value="SQR_TypeC_SdhC"/>
    <property type="match status" value="1"/>
</dbReference>
<dbReference type="FunFam" id="1.20.1300.10:FF:000008">
    <property type="entry name" value="Succinate dehydrogenase cytochrome b560 subunit"/>
    <property type="match status" value="1"/>
</dbReference>
<dbReference type="Gene3D" id="1.20.1300.10">
    <property type="entry name" value="Fumarate reductase/succinate dehydrogenase, transmembrane subunit"/>
    <property type="match status" value="1"/>
</dbReference>
<dbReference type="InterPro" id="IPR034804">
    <property type="entry name" value="SQR/QFR_C/D"/>
</dbReference>
<dbReference type="InterPro" id="IPR018495">
    <property type="entry name" value="Succ_DH_cyt_bsu_CS"/>
</dbReference>
<dbReference type="InterPro" id="IPR014314">
    <property type="entry name" value="Succ_DH_cytb556"/>
</dbReference>
<dbReference type="InterPro" id="IPR000701">
    <property type="entry name" value="SuccDH_FuR_B_TM-su"/>
</dbReference>
<dbReference type="PANTHER" id="PTHR10978">
    <property type="entry name" value="SUCCINATE DEHYDROGENASE CYTOCHROME B560 SUBUNIT"/>
    <property type="match status" value="1"/>
</dbReference>
<dbReference type="PANTHER" id="PTHR10978:SF5">
    <property type="entry name" value="SUCCINATE DEHYDROGENASE CYTOCHROME B560 SUBUNIT, MITOCHONDRIAL"/>
    <property type="match status" value="1"/>
</dbReference>
<dbReference type="Pfam" id="PF01127">
    <property type="entry name" value="Sdh_cyt"/>
    <property type="match status" value="1"/>
</dbReference>
<dbReference type="SUPFAM" id="SSF81343">
    <property type="entry name" value="Fumarate reductase respiratory complex transmembrane subunits"/>
    <property type="match status" value="1"/>
</dbReference>
<dbReference type="PROSITE" id="PS01000">
    <property type="entry name" value="SDH_CYT_1"/>
    <property type="match status" value="1"/>
</dbReference>
<dbReference type="PROSITE" id="PS01001">
    <property type="entry name" value="SDH_CYT_2"/>
    <property type="match status" value="1"/>
</dbReference>
<feature type="transit peptide" description="Mitochondrion" evidence="6">
    <location>
        <begin position="1"/>
        <end position="50"/>
    </location>
</feature>
<feature type="chain" id="PRO_0000003638" description="Succinate dehydrogenase [ubiquinone] cytochrome b subunit, mitochondrial">
    <location>
        <begin position="51"/>
        <end position="198"/>
    </location>
</feature>
<feature type="topological domain" description="Mitochondrial matrix" evidence="2">
    <location>
        <begin position="51"/>
        <end position="99"/>
    </location>
</feature>
<feature type="transmembrane region" description="Helical" evidence="2">
    <location>
        <begin position="100"/>
        <end position="120"/>
    </location>
</feature>
<feature type="topological domain" description="Mitochondrial intermembrane" evidence="2">
    <location>
        <begin position="121"/>
        <end position="139"/>
    </location>
</feature>
<feature type="transmembrane region" description="Helical" evidence="2">
    <location>
        <begin position="140"/>
        <end position="160"/>
    </location>
</feature>
<feature type="topological domain" description="Mitochondrial matrix" evidence="2">
    <location>
        <begin position="161"/>
        <end position="175"/>
    </location>
</feature>
<feature type="transmembrane region" description="Helical" evidence="2">
    <location>
        <begin position="176"/>
        <end position="196"/>
    </location>
</feature>
<feature type="topological domain" description="Mitochondrial intermembrane" evidence="2">
    <location>
        <begin position="197"/>
        <end position="198"/>
    </location>
</feature>
<feature type="binding site" evidence="1">
    <location>
        <position position="93"/>
    </location>
    <ligand>
        <name>a ubiquinone</name>
        <dbReference type="ChEBI" id="CHEBI:16389"/>
    </ligand>
</feature>
<feature type="binding site" evidence="1">
    <location>
        <position position="97"/>
    </location>
    <ligand>
        <name>a ubiquinone</name>
        <dbReference type="ChEBI" id="CHEBI:16389"/>
    </ligand>
</feature>
<feature type="binding site" description="axial binding residue" evidence="1">
    <location>
        <position position="156"/>
    </location>
    <ligand>
        <name>heme</name>
        <dbReference type="ChEBI" id="CHEBI:30413"/>
        <note>ligand shared with second transmembrane subunit</note>
    </ligand>
    <ligandPart>
        <name>Fe</name>
        <dbReference type="ChEBI" id="CHEBI:18248"/>
    </ligandPart>
</feature>
<feature type="mutagenesis site" description="Decreases quinone reductase activity." evidence="5">
    <original>H</original>
    <variation>A</variation>
    <variation>D</variation>
    <location>
        <position position="96"/>
    </location>
</feature>
<feature type="mutagenesis site" description="Decreases quinone reductase activity. Little effect on complex assembly." evidence="3">
    <original>F</original>
    <variation>V</variation>
    <location>
        <position position="153"/>
    </location>
</feature>
<feature type="mutagenesis site" description="Decreases SDH cytochrome b content." evidence="5">
    <original>H</original>
    <variation>A</variation>
    <location>
        <position position="156"/>
    </location>
</feature>
<feature type="mutagenesis site" description="Decreases quinone reductase activity. Little effect on complex assembly." evidence="3">
    <original>H</original>
    <variation>Q</variation>
    <location>
        <position position="163"/>
    </location>
</feature>
<feature type="mutagenesis site" description="Decreases quinone reductase activity. Little effect on complex assembly." evidence="3">
    <original>W</original>
    <variation>R</variation>
    <location>
        <position position="166"/>
    </location>
</feature>
<feature type="mutagenesis site" description="Reduces SDH FAD content. Probably impairs complex assembly.">
    <original>D</original>
    <variation>V</variation>
    <location>
        <position position="167"/>
    </location>
</feature>
<feature type="sequence conflict" description="In Ref. 2; CAA52088." evidence="7" ref="2">
    <original>L</original>
    <variation>A</variation>
    <location>
        <position position="10"/>
    </location>
</feature>
<sequence length="198" mass="22068">MSAMMVKLGLNKSALLLKPSAFSRAAALSSSRRLLFNTARTNFLSTSPLKNVASEMNTKAAIAEEQILNKQRAKRPISPHLTIYQPQLTWYLSSLHRISLVLMGLGFYLFTILFGVSGLLGLGLTTEKVSNWYHQKFSKITEWSIKGSFAYLFAIHYGGAIRHLIWDTAKELTLKGVYRTGYALIGFTAVLGTYLLTL</sequence>
<proteinExistence type="evidence at protein level"/>
<gene>
    <name type="primary">SDH3</name>
    <name type="synonym">CYB3</name>
    <name type="ordered locus">YKL141W</name>
    <name type="ORF">YKL4</name>
</gene>
<keyword id="KW-0002">3D-structure</keyword>
<keyword id="KW-0903">Direct protein sequencing</keyword>
<keyword id="KW-0249">Electron transport</keyword>
<keyword id="KW-0349">Heme</keyword>
<keyword id="KW-0408">Iron</keyword>
<keyword id="KW-0472">Membrane</keyword>
<keyword id="KW-0479">Metal-binding</keyword>
<keyword id="KW-0496">Mitochondrion</keyword>
<keyword id="KW-0999">Mitochondrion inner membrane</keyword>
<keyword id="KW-0874">Quinone</keyword>
<keyword id="KW-1185">Reference proteome</keyword>
<keyword id="KW-0809">Transit peptide</keyword>
<keyword id="KW-0812">Transmembrane</keyword>
<keyword id="KW-1133">Transmembrane helix</keyword>
<keyword id="KW-0813">Transport</keyword>
<keyword id="KW-0816">Tricarboxylic acid cycle</keyword>
<reference key="1">
    <citation type="journal article" date="1992" name="Yeast">
        <title>Molecular cloning and physical analysis of an 8.2 kb segment of chromosome XI of Saccharomyces cerevisiae reveals five tightly linked genes.</title>
        <authorList>
            <person name="Abraham P.R."/>
            <person name="Mulder A."/>
            <person name="Van'T Riet J."/>
            <person name="Planta R.J."/>
            <person name="Raue H.A."/>
        </authorList>
    </citation>
    <scope>NUCLEOTIDE SEQUENCE [GENOMIC DNA]</scope>
</reference>
<reference key="2">
    <citation type="journal article" date="1994" name="J. Biol. Chem.">
        <title>Structure and regulation of SDH3, the yeast gene encoding the cytochrome b560 subunit of respiratory complex II.</title>
        <authorList>
            <person name="Daignan-Fornier B."/>
            <person name="Valens M."/>
            <person name="Lemire B.D."/>
            <person name="Bolotin-Fukuhara M."/>
        </authorList>
    </citation>
    <scope>NUCLEOTIDE SEQUENCE [GENOMIC DNA]</scope>
    <scope>PROTEIN SEQUENCE OF 51-79</scope>
</reference>
<reference key="3">
    <citation type="journal article" date="1994" name="Nature">
        <title>Complete DNA sequence of yeast chromosome XI.</title>
        <authorList>
            <person name="Dujon B."/>
            <person name="Alexandraki D."/>
            <person name="Andre B."/>
            <person name="Ansorge W."/>
            <person name="Baladron V."/>
            <person name="Ballesta J.P.G."/>
            <person name="Banrevi A."/>
            <person name="Bolle P.-A."/>
            <person name="Bolotin-Fukuhara M."/>
            <person name="Bossier P."/>
            <person name="Bou G."/>
            <person name="Boyer J."/>
            <person name="Buitrago M.J."/>
            <person name="Cheret G."/>
            <person name="Colleaux L."/>
            <person name="Daignan-Fornier B."/>
            <person name="del Rey F."/>
            <person name="Dion C."/>
            <person name="Domdey H."/>
            <person name="Duesterhoeft A."/>
            <person name="Duesterhus S."/>
            <person name="Entian K.-D."/>
            <person name="Erfle H."/>
            <person name="Esteban P.F."/>
            <person name="Feldmann H."/>
            <person name="Fernandes L."/>
            <person name="Fobo G.M."/>
            <person name="Fritz C."/>
            <person name="Fukuhara H."/>
            <person name="Gabel C."/>
            <person name="Gaillon L."/>
            <person name="Garcia-Cantalejo J.M."/>
            <person name="Garcia-Ramirez J.J."/>
            <person name="Gent M.E."/>
            <person name="Ghazvini M."/>
            <person name="Goffeau A."/>
            <person name="Gonzalez A."/>
            <person name="Grothues D."/>
            <person name="Guerreiro P."/>
            <person name="Hegemann J.H."/>
            <person name="Hewitt N."/>
            <person name="Hilger F."/>
            <person name="Hollenberg C.P."/>
            <person name="Horaitis O."/>
            <person name="Indge K.J."/>
            <person name="Jacquier A."/>
            <person name="James C.M."/>
            <person name="Jauniaux J.-C."/>
            <person name="Jimenez A."/>
            <person name="Keuchel H."/>
            <person name="Kirchrath L."/>
            <person name="Kleine K."/>
            <person name="Koetter P."/>
            <person name="Legrain P."/>
            <person name="Liebl S."/>
            <person name="Louis E.J."/>
            <person name="Maia e Silva A."/>
            <person name="Marck C."/>
            <person name="Monnier A.-L."/>
            <person name="Moestl D."/>
            <person name="Mueller S."/>
            <person name="Obermaier B."/>
            <person name="Oliver S.G."/>
            <person name="Pallier C."/>
            <person name="Pascolo S."/>
            <person name="Pfeiffer F."/>
            <person name="Philippsen P."/>
            <person name="Planta R.J."/>
            <person name="Pohl F.M."/>
            <person name="Pohl T.M."/>
            <person name="Poehlmann R."/>
            <person name="Portetelle D."/>
            <person name="Purnelle B."/>
            <person name="Puzos V."/>
            <person name="Ramezani Rad M."/>
            <person name="Rasmussen S.W."/>
            <person name="Remacha M.A."/>
            <person name="Revuelta J.L."/>
            <person name="Richard G.-F."/>
            <person name="Rieger M."/>
            <person name="Rodrigues-Pousada C."/>
            <person name="Rose M."/>
            <person name="Rupp T."/>
            <person name="Santos M.A."/>
            <person name="Schwager C."/>
            <person name="Sensen C."/>
            <person name="Skala J."/>
            <person name="Soares H."/>
            <person name="Sor F."/>
            <person name="Stegemann J."/>
            <person name="Tettelin H."/>
            <person name="Thierry A."/>
            <person name="Tzermia M."/>
            <person name="Urrestarazu L.A."/>
            <person name="van Dyck L."/>
            <person name="van Vliet-Reedijk J.C."/>
            <person name="Valens M."/>
            <person name="Vandenbol M."/>
            <person name="Vilela C."/>
            <person name="Vissers S."/>
            <person name="von Wettstein D."/>
            <person name="Voss H."/>
            <person name="Wiemann S."/>
            <person name="Xu G."/>
            <person name="Zimmermann J."/>
            <person name="Haasemann M."/>
            <person name="Becker I."/>
            <person name="Mewes H.-W."/>
        </authorList>
    </citation>
    <scope>NUCLEOTIDE SEQUENCE [LARGE SCALE GENOMIC DNA]</scope>
    <source>
        <strain>ATCC 204508 / S288c</strain>
    </source>
</reference>
<reference key="4">
    <citation type="journal article" date="2014" name="G3 (Bethesda)">
        <title>The reference genome sequence of Saccharomyces cerevisiae: Then and now.</title>
        <authorList>
            <person name="Engel S.R."/>
            <person name="Dietrich F.S."/>
            <person name="Fisk D.G."/>
            <person name="Binkley G."/>
            <person name="Balakrishnan R."/>
            <person name="Costanzo M.C."/>
            <person name="Dwight S.S."/>
            <person name="Hitz B.C."/>
            <person name="Karra K."/>
            <person name="Nash R.S."/>
            <person name="Weng S."/>
            <person name="Wong E.D."/>
            <person name="Lloyd P."/>
            <person name="Skrzypek M.S."/>
            <person name="Miyasato S.R."/>
            <person name="Simison M."/>
            <person name="Cherry J.M."/>
        </authorList>
    </citation>
    <scope>GENOME REANNOTATION</scope>
    <source>
        <strain>ATCC 204508 / S288c</strain>
    </source>
</reference>
<reference key="5">
    <citation type="journal article" date="2007" name="Genome Res.">
        <title>Approaching a complete repository of sequence-verified protein-encoding clones for Saccharomyces cerevisiae.</title>
        <authorList>
            <person name="Hu Y."/>
            <person name="Rolfs A."/>
            <person name="Bhullar B."/>
            <person name="Murthy T.V.S."/>
            <person name="Zhu C."/>
            <person name="Berger M.F."/>
            <person name="Camargo A.A."/>
            <person name="Kelley F."/>
            <person name="McCarron S."/>
            <person name="Jepson D."/>
            <person name="Richardson A."/>
            <person name="Raphael J."/>
            <person name="Moreira D."/>
            <person name="Taycher E."/>
            <person name="Zuo D."/>
            <person name="Mohr S."/>
            <person name="Kane M.F."/>
            <person name="Williamson J."/>
            <person name="Simpson A.J.G."/>
            <person name="Bulyk M.L."/>
            <person name="Harlow E."/>
            <person name="Marsischky G."/>
            <person name="Kolodner R.D."/>
            <person name="LaBaer J."/>
        </authorList>
    </citation>
    <scope>NUCLEOTIDE SEQUENCE [GENOMIC DNA]</scope>
    <source>
        <strain>ATCC 204508 / S288c</strain>
    </source>
</reference>
<reference key="6">
    <citation type="journal article" date="1994" name="Mol. Gen. Genet.">
        <title>Characterization of the Saccharomyces cerevisiae nuclear gene CYB3 encoding a cytochrome b polypeptide of respiratory complex II.</title>
        <authorList>
            <person name="Abraham P.R."/>
            <person name="Mulder A."/>
            <person name="Van'T Riet J."/>
            <person name="Raue H.A."/>
        </authorList>
    </citation>
    <scope>CHARACTERIZATION</scope>
</reference>
<reference key="7">
    <citation type="journal article" date="1999" name="J. Biol. Chem.">
        <title>The Saccharomyces cerevisiae succinate-ubiquinone oxidoreductase. Identification of Sdh3p amino acid residues involved in ubiquinone binding.</title>
        <authorList>
            <person name="Oyedotun K.S."/>
            <person name="Lemire B.D."/>
        </authorList>
    </citation>
    <scope>MUTAGENESIS OF PHE-153; HIS-163 AND TRP-166</scope>
</reference>
<reference key="8">
    <citation type="journal article" date="2002" name="Biochim. Biophys. Acta">
        <title>The Saccharomyces cerevisiae mitochondrial succinate:ubiquinone oxidoreductase.</title>
        <authorList>
            <person name="Lemire B.D."/>
            <person name="Oyedotun K.S."/>
        </authorList>
    </citation>
    <scope>REVIEW ON SUCCINATE DEHYDROGENASE</scope>
</reference>
<reference key="9">
    <citation type="journal article" date="2003" name="Nature">
        <title>Global analysis of protein expression in yeast.</title>
        <authorList>
            <person name="Ghaemmaghami S."/>
            <person name="Huh W.-K."/>
            <person name="Bower K."/>
            <person name="Howson R.W."/>
            <person name="Belle A."/>
            <person name="Dephoure N."/>
            <person name="O'Shea E.K."/>
            <person name="Weissman J.S."/>
        </authorList>
    </citation>
    <scope>LEVEL OF PROTEIN EXPRESSION [LARGE SCALE ANALYSIS]</scope>
</reference>
<reference key="10">
    <citation type="journal article" date="2004" name="J. Biol. Chem.">
        <title>Identification of the heme axial ligands in the cytochrome b562 of the Saccharomyces cerevisiae succinate dehydrogenase.</title>
        <authorList>
            <person name="Oyedotun K.S."/>
            <person name="Yau P.F."/>
            <person name="Lemire B.D."/>
        </authorList>
    </citation>
    <scope>MUTAGENESIS OF HIS-96 AND HIS-156</scope>
</reference>
<reference key="11">
    <citation type="journal article" date="2004" name="J. Biol. Chem.">
        <title>The quaternary structure of the Saccharomyces cerevisiae succinate dehydrogenase. Homology modeling, cofactor docking, and molecular dynamics simulation studies.</title>
        <authorList>
            <person name="Oyedotun K.S."/>
            <person name="Lemire B.D."/>
        </authorList>
    </citation>
    <scope>3D-STRUCTURE MODELING OF 51-198</scope>
</reference>
<accession>P33421</accession>
<accession>D6VX55</accession>
<protein>
    <recommendedName>
        <fullName>Succinate dehydrogenase [ubiquinone] cytochrome b subunit, mitochondrial</fullName>
    </recommendedName>
</protein>
<comment type="function">
    <text>Membrane-anchoring mono-heme cytochrome b subunit of succinate dehydrogenase (SDH) that is involved in system II of the mitochondrial electron transport chain and is responsible for transferring electrons from succinate to ubiquinone (coenzyme Q). SDH3 and SDH4 form the membrane dimer that anchors the catalytic dimer formed by SDH1 and SDH2 to the matrix surface of the mitochondrial inner membrane. Electrons originating from the catalytic dimer enter the membrane dimer for ubiquinone reduction.</text>
</comment>
<comment type="cofactor">
    <cofactor>
        <name>heme</name>
        <dbReference type="ChEBI" id="CHEBI:30413"/>
    </cofactor>
    <text>The heme is bound between the two transmembrane subunits.</text>
</comment>
<comment type="pathway">
    <text>Carbohydrate metabolism; tricarboxylic acid cycle.</text>
</comment>
<comment type="subunit">
    <text>Forms part of complex II containing four subunits: a flavoprotein (FP), an iron-sulfur protein (IP) and a cytochrome b composed of two integral membrane proteins.</text>
</comment>
<comment type="subcellular location">
    <subcellularLocation>
        <location>Mitochondrion inner membrane</location>
        <topology>Multi-pass membrane protein</topology>
    </subcellularLocation>
</comment>
<comment type="miscellaneous">
    <text evidence="4">Present with 238 molecules/cell in log phase SD medium.</text>
</comment>
<comment type="similarity">
    <text evidence="7">Belongs to the cytochrome b560 family.</text>
</comment>